<accession>Q5RFF4</accession>
<feature type="initiator methionine" description="Removed" evidence="1">
    <location>
        <position position="1"/>
    </location>
</feature>
<feature type="chain" id="PRO_0000130556" description="Eukaryotic translation initiation factor 1">
    <location>
        <begin position="2"/>
        <end position="113"/>
    </location>
</feature>
<feature type="site" description="Binds 40S ribosomal subunit" evidence="1">
    <location>
        <position position="41"/>
    </location>
</feature>
<feature type="site" description="Binds 40S ribosomal subunit" evidence="1">
    <location>
        <position position="65"/>
    </location>
</feature>
<feature type="modified residue" description="N-acetylserine" evidence="1">
    <location>
        <position position="2"/>
    </location>
</feature>
<feature type="modified residue" description="Phosphoserine" evidence="1">
    <location>
        <position position="2"/>
    </location>
</feature>
<feature type="modified residue" description="Phosphoserine" evidence="1">
    <location>
        <position position="9"/>
    </location>
</feature>
<proteinExistence type="inferred from homology"/>
<sequence>MSAIQNLHSFDPFADASKGDDLLPAGTEDYIHIRIQQRNGRKTLTTVQGIADDYDKKKLVKAFKKKFACNGTVIEHPEYGEVIQLQGDQRKNICQFLVEIGLAKDDQLKVHGF</sequence>
<dbReference type="EMBL" id="CR857204">
    <property type="protein sequence ID" value="CAH89503.1"/>
    <property type="molecule type" value="mRNA"/>
</dbReference>
<dbReference type="RefSeq" id="NP_001124650.1">
    <property type="nucleotide sequence ID" value="NM_001131178.2"/>
</dbReference>
<dbReference type="BMRB" id="Q5RFF4"/>
<dbReference type="SMR" id="Q5RFF4"/>
<dbReference type="FunCoup" id="Q5RFF4">
    <property type="interactions" value="1940"/>
</dbReference>
<dbReference type="STRING" id="9601.ENSPPYP00000024435"/>
<dbReference type="Ensembl" id="ENSPPYT00000043758.1">
    <property type="protein sequence ID" value="ENSPPYP00000039833.1"/>
    <property type="gene ID" value="ENSPPYG00000034100.1"/>
</dbReference>
<dbReference type="GeneID" id="100171491"/>
<dbReference type="KEGG" id="pon:100171491"/>
<dbReference type="CTD" id="10209"/>
<dbReference type="eggNOG" id="KOG1770">
    <property type="taxonomic scope" value="Eukaryota"/>
</dbReference>
<dbReference type="GeneTree" id="ENSGT00390000015789"/>
<dbReference type="HOGENOM" id="CLU_082805_3_0_1"/>
<dbReference type="InParanoid" id="Q5RFF4"/>
<dbReference type="OMA" id="VENHIHI"/>
<dbReference type="OrthoDB" id="10248435at2759"/>
<dbReference type="TreeFam" id="TF314417"/>
<dbReference type="Proteomes" id="UP000001595">
    <property type="component" value="Chromosome 17"/>
</dbReference>
<dbReference type="GO" id="GO:0016282">
    <property type="term" value="C:eukaryotic 43S preinitiation complex"/>
    <property type="evidence" value="ECO:0007669"/>
    <property type="project" value="Ensembl"/>
</dbReference>
<dbReference type="GO" id="GO:0033290">
    <property type="term" value="C:eukaryotic 48S preinitiation complex"/>
    <property type="evidence" value="ECO:0007669"/>
    <property type="project" value="Ensembl"/>
</dbReference>
<dbReference type="GO" id="GO:0043614">
    <property type="term" value="C:multi-eIF complex"/>
    <property type="evidence" value="ECO:0007669"/>
    <property type="project" value="Ensembl"/>
</dbReference>
<dbReference type="GO" id="GO:0005634">
    <property type="term" value="C:nucleus"/>
    <property type="evidence" value="ECO:0007669"/>
    <property type="project" value="Ensembl"/>
</dbReference>
<dbReference type="GO" id="GO:0043024">
    <property type="term" value="F:ribosomal small subunit binding"/>
    <property type="evidence" value="ECO:0007669"/>
    <property type="project" value="Ensembl"/>
</dbReference>
<dbReference type="GO" id="GO:0003743">
    <property type="term" value="F:translation initiation factor activity"/>
    <property type="evidence" value="ECO:0007669"/>
    <property type="project" value="UniProtKB-KW"/>
</dbReference>
<dbReference type="GO" id="GO:0006446">
    <property type="term" value="P:regulation of translational initiation"/>
    <property type="evidence" value="ECO:0007669"/>
    <property type="project" value="Ensembl"/>
</dbReference>
<dbReference type="CDD" id="cd11566">
    <property type="entry name" value="eIF1_SUI1"/>
    <property type="match status" value="1"/>
</dbReference>
<dbReference type="FunFam" id="3.30.780.10:FF:000003">
    <property type="entry name" value="Eukaryotic translation initiation factor 1b"/>
    <property type="match status" value="1"/>
</dbReference>
<dbReference type="Gene3D" id="3.30.780.10">
    <property type="entry name" value="SUI1-like domain"/>
    <property type="match status" value="1"/>
</dbReference>
<dbReference type="InterPro" id="IPR001950">
    <property type="entry name" value="SUI1"/>
</dbReference>
<dbReference type="InterPro" id="IPR036877">
    <property type="entry name" value="SUI1_dom_sf"/>
</dbReference>
<dbReference type="InterPro" id="IPR005874">
    <property type="entry name" value="SUI1_euk"/>
</dbReference>
<dbReference type="NCBIfam" id="TIGR01160">
    <property type="entry name" value="SUI1_MOF2"/>
    <property type="match status" value="1"/>
</dbReference>
<dbReference type="PANTHER" id="PTHR10388">
    <property type="entry name" value="EUKARYOTIC TRANSLATION INITIATION FACTOR SUI1"/>
    <property type="match status" value="1"/>
</dbReference>
<dbReference type="Pfam" id="PF01253">
    <property type="entry name" value="SUI1"/>
    <property type="match status" value="1"/>
</dbReference>
<dbReference type="PIRSF" id="PIRSF004499">
    <property type="entry name" value="SUI1_euk"/>
    <property type="match status" value="1"/>
</dbReference>
<dbReference type="SUPFAM" id="SSF55159">
    <property type="entry name" value="eIF1-like"/>
    <property type="match status" value="1"/>
</dbReference>
<dbReference type="PROSITE" id="PS50296">
    <property type="entry name" value="SUI1"/>
    <property type="match status" value="1"/>
</dbReference>
<protein>
    <recommendedName>
        <fullName>Eukaryotic translation initiation factor 1</fullName>
        <shortName>eIF1</shortName>
    </recommendedName>
    <alternativeName>
        <fullName>Protein translation factor SUI1 homolog</fullName>
    </alternativeName>
</protein>
<reference key="1">
    <citation type="submission" date="2004-11" db="EMBL/GenBank/DDBJ databases">
        <authorList>
            <consortium name="The German cDNA consortium"/>
        </authorList>
    </citation>
    <scope>NUCLEOTIDE SEQUENCE [LARGE SCALE MRNA]</scope>
    <source>
        <tissue>Heart</tissue>
    </source>
</reference>
<gene>
    <name type="primary">EIF1</name>
    <name type="synonym">SUI1</name>
</gene>
<keyword id="KW-0007">Acetylation</keyword>
<keyword id="KW-0963">Cytoplasm</keyword>
<keyword id="KW-0396">Initiation factor</keyword>
<keyword id="KW-0597">Phosphoprotein</keyword>
<keyword id="KW-0648">Protein biosynthesis</keyword>
<keyword id="KW-1185">Reference proteome</keyword>
<evidence type="ECO:0000250" key="1">
    <source>
        <dbReference type="UniProtKB" id="P41567"/>
    </source>
</evidence>
<evidence type="ECO:0000305" key="2"/>
<organism>
    <name type="scientific">Pongo abelii</name>
    <name type="common">Sumatran orangutan</name>
    <name type="synonym">Pongo pygmaeus abelii</name>
    <dbReference type="NCBI Taxonomy" id="9601"/>
    <lineage>
        <taxon>Eukaryota</taxon>
        <taxon>Metazoa</taxon>
        <taxon>Chordata</taxon>
        <taxon>Craniata</taxon>
        <taxon>Vertebrata</taxon>
        <taxon>Euteleostomi</taxon>
        <taxon>Mammalia</taxon>
        <taxon>Eutheria</taxon>
        <taxon>Euarchontoglires</taxon>
        <taxon>Primates</taxon>
        <taxon>Haplorrhini</taxon>
        <taxon>Catarrhini</taxon>
        <taxon>Hominidae</taxon>
        <taxon>Pongo</taxon>
    </lineage>
</organism>
<comment type="function">
    <text evidence="1">Component of the 43S pre-initiation complex (43S PIC), which binds to the mRNA cap-proximal region, scans mRNA 5'-untranslated region, and locates the initiation codon. Together with eIF1A (EIF1AX), EIF1 facilitates scanning and is essential for start codon recognition on the basis of AUG nucleotide context and location relative to the 5'-cap. Participates to initiation codon selection by influencing the conformation of the 40S ribosomal subunit and the positions of bound mRNA and initiator tRNA; this is possible after its binding to the interface surface of the platform of the 40S ribosomal subunit close to the P-site. Together with eIF1A (EIF1AX), also regulates the opening and closing of the mRNA binding channel, which ensures mRNA recruitment, scanning and the fidelity of initiation codon selection. Continuously monitors and protects against premature and partial base-pairing of codons in the 5'-UTR with the anticodon of initiator tRNA. Together with eIF1A (EIF1AX), acts for ribosomal scanning, promotion of the assembly of 48S complex at the initiation codon (43S PIC becomes 48S PIC after the start codon is reached), and dissociation of aberrant complexes. Interacts with EIF4G1, which in a mutual exclusive interaction associates either with EIF1 or with EIF4E on a common binding site. EIF4G1-EIF1 complex promotes ribosome scanning (on both short and long 5'UTR), leaky scanning (on short 5'UTR) which is the bypass of the initial start codon, and discrimination against cap-proximal AUG. Is probably maintained within the 43S PIC in open conformation thanks to eIF1A-EIF5 interaction. Once the correct start codon is reached, EIF1 is physically excluded from the decoding site, shifting the PIC into the closed conformation and arresting it at the start codon.</text>
</comment>
<comment type="subunit">
    <text evidence="1">Component of the 43S pre-initiation complex (43S PIC), which is composed of the 40S ribosomal subunit, EIF1, eIF1A (EIF1AX), eIF3 complex, EIF5 and eIF2-GTP-initiator tRNA complex (eIF2 ternary complex). Interacts with EIF4G1; in specific 5'-UTR length and AUG context. Interacts with EIF5; which in a mutual exclusive interaction associates either with EIF1 or with EIF2S2 on a common binding site. Interacts with RENT2.</text>
</comment>
<comment type="subcellular location">
    <subcellularLocation>
        <location evidence="1">Cytoplasm</location>
    </subcellularLocation>
</comment>
<comment type="similarity">
    <text evidence="2">Belongs to the SUI1 family.</text>
</comment>
<name>EIF1_PONAB</name>